<accession>A1WCQ6</accession>
<gene>
    <name evidence="1" type="primary">hprK</name>
    <name type="ordered locus">Ajs_3925</name>
</gene>
<proteinExistence type="inferred from homology"/>
<dbReference type="EC" id="2.7.11.-" evidence="1"/>
<dbReference type="EC" id="2.7.4.-" evidence="1"/>
<dbReference type="EMBL" id="CP000539">
    <property type="protein sequence ID" value="ABM44031.1"/>
    <property type="molecule type" value="Genomic_DNA"/>
</dbReference>
<dbReference type="SMR" id="A1WCQ6"/>
<dbReference type="STRING" id="232721.Ajs_3925"/>
<dbReference type="KEGG" id="ajs:Ajs_3925"/>
<dbReference type="eggNOG" id="COG1493">
    <property type="taxonomic scope" value="Bacteria"/>
</dbReference>
<dbReference type="HOGENOM" id="CLU_052030_0_1_4"/>
<dbReference type="Proteomes" id="UP000000645">
    <property type="component" value="Chromosome"/>
</dbReference>
<dbReference type="GO" id="GO:0005524">
    <property type="term" value="F:ATP binding"/>
    <property type="evidence" value="ECO:0007669"/>
    <property type="project" value="UniProtKB-UniRule"/>
</dbReference>
<dbReference type="GO" id="GO:0000287">
    <property type="term" value="F:magnesium ion binding"/>
    <property type="evidence" value="ECO:0007669"/>
    <property type="project" value="UniProtKB-UniRule"/>
</dbReference>
<dbReference type="GO" id="GO:0000155">
    <property type="term" value="F:phosphorelay sensor kinase activity"/>
    <property type="evidence" value="ECO:0007669"/>
    <property type="project" value="InterPro"/>
</dbReference>
<dbReference type="GO" id="GO:0004674">
    <property type="term" value="F:protein serine/threonine kinase activity"/>
    <property type="evidence" value="ECO:0007669"/>
    <property type="project" value="UniProtKB-KW"/>
</dbReference>
<dbReference type="GO" id="GO:0004712">
    <property type="term" value="F:protein serine/threonine/tyrosine kinase activity"/>
    <property type="evidence" value="ECO:0007669"/>
    <property type="project" value="UniProtKB-UniRule"/>
</dbReference>
<dbReference type="GO" id="GO:0006109">
    <property type="term" value="P:regulation of carbohydrate metabolic process"/>
    <property type="evidence" value="ECO:0007669"/>
    <property type="project" value="UniProtKB-UniRule"/>
</dbReference>
<dbReference type="CDD" id="cd01918">
    <property type="entry name" value="HprK_C"/>
    <property type="match status" value="1"/>
</dbReference>
<dbReference type="FunFam" id="3.40.50.300:FF:000174">
    <property type="entry name" value="HPr kinase/phosphorylase"/>
    <property type="match status" value="1"/>
</dbReference>
<dbReference type="Gene3D" id="3.40.1390.20">
    <property type="entry name" value="HprK N-terminal domain-like"/>
    <property type="match status" value="1"/>
</dbReference>
<dbReference type="Gene3D" id="3.40.50.300">
    <property type="entry name" value="P-loop containing nucleotide triphosphate hydrolases"/>
    <property type="match status" value="1"/>
</dbReference>
<dbReference type="HAMAP" id="MF_01249">
    <property type="entry name" value="HPr_kinase"/>
    <property type="match status" value="1"/>
</dbReference>
<dbReference type="InterPro" id="IPR003755">
    <property type="entry name" value="HPr(Ser)_kin/Pase"/>
</dbReference>
<dbReference type="InterPro" id="IPR011104">
    <property type="entry name" value="Hpr_kin/Pase_C"/>
</dbReference>
<dbReference type="InterPro" id="IPR011126">
    <property type="entry name" value="Hpr_kin/Pase_Hpr_N"/>
</dbReference>
<dbReference type="InterPro" id="IPR027417">
    <property type="entry name" value="P-loop_NTPase"/>
</dbReference>
<dbReference type="InterPro" id="IPR028979">
    <property type="entry name" value="Ser_kin/Pase_Hpr-like_N_sf"/>
</dbReference>
<dbReference type="NCBIfam" id="TIGR00679">
    <property type="entry name" value="hpr-ser"/>
    <property type="match status" value="1"/>
</dbReference>
<dbReference type="PANTHER" id="PTHR30305:SF1">
    <property type="entry name" value="HPR KINASE_PHOSPHORYLASE"/>
    <property type="match status" value="1"/>
</dbReference>
<dbReference type="PANTHER" id="PTHR30305">
    <property type="entry name" value="PROTEIN YJDM-RELATED"/>
    <property type="match status" value="1"/>
</dbReference>
<dbReference type="Pfam" id="PF07475">
    <property type="entry name" value="Hpr_kinase_C"/>
    <property type="match status" value="1"/>
</dbReference>
<dbReference type="Pfam" id="PF02603">
    <property type="entry name" value="Hpr_kinase_N"/>
    <property type="match status" value="1"/>
</dbReference>
<dbReference type="SUPFAM" id="SSF75138">
    <property type="entry name" value="HprK N-terminal domain-like"/>
    <property type="match status" value="1"/>
</dbReference>
<dbReference type="SUPFAM" id="SSF53795">
    <property type="entry name" value="PEP carboxykinase-like"/>
    <property type="match status" value="1"/>
</dbReference>
<evidence type="ECO:0000255" key="1">
    <source>
        <dbReference type="HAMAP-Rule" id="MF_01249"/>
    </source>
</evidence>
<sequence>MKPNVVSADVLFEEFRNLLKWEWVAGLGASERRFAEVAVRAARSGADLVGYLNYIHPYRAQVLGEREIAYLTNATPEDCKRRIARIVTLEPPVLVLADGQAAPDEVVSMCERAQIPMFSTQESAAFVIDVLRAYLSKHFADRTTMHGVFMDILGLGVLITGESGLGKSELGLELITRGNGLVADDAVDLYRINQTTIEGKCPELLQNLLEVRGIGLLDIRAIFGETAVRRRMRLKLIVHLVRKETLERDYERLPYEPLTQDVLGVPVLKVVIQVVAGRNIAVLVEAAVRNTILQLRGIDTYQEFVERHRRAMERGGAS</sequence>
<organism>
    <name type="scientific">Acidovorax sp. (strain JS42)</name>
    <dbReference type="NCBI Taxonomy" id="232721"/>
    <lineage>
        <taxon>Bacteria</taxon>
        <taxon>Pseudomonadati</taxon>
        <taxon>Pseudomonadota</taxon>
        <taxon>Betaproteobacteria</taxon>
        <taxon>Burkholderiales</taxon>
        <taxon>Comamonadaceae</taxon>
        <taxon>Acidovorax</taxon>
    </lineage>
</organism>
<keyword id="KW-0067">ATP-binding</keyword>
<keyword id="KW-0418">Kinase</keyword>
<keyword id="KW-0460">Magnesium</keyword>
<keyword id="KW-0479">Metal-binding</keyword>
<keyword id="KW-0511">Multifunctional enzyme</keyword>
<keyword id="KW-0547">Nucleotide-binding</keyword>
<keyword id="KW-0723">Serine/threonine-protein kinase</keyword>
<keyword id="KW-0808">Transferase</keyword>
<reference key="1">
    <citation type="submission" date="2006-12" db="EMBL/GenBank/DDBJ databases">
        <title>Complete sequence of chromosome 1 of Acidovorax sp. JS42.</title>
        <authorList>
            <person name="Copeland A."/>
            <person name="Lucas S."/>
            <person name="Lapidus A."/>
            <person name="Barry K."/>
            <person name="Detter J.C."/>
            <person name="Glavina del Rio T."/>
            <person name="Dalin E."/>
            <person name="Tice H."/>
            <person name="Pitluck S."/>
            <person name="Chertkov O."/>
            <person name="Brettin T."/>
            <person name="Bruce D."/>
            <person name="Han C."/>
            <person name="Tapia R."/>
            <person name="Gilna P."/>
            <person name="Schmutz J."/>
            <person name="Larimer F."/>
            <person name="Land M."/>
            <person name="Hauser L."/>
            <person name="Kyrpides N."/>
            <person name="Kim E."/>
            <person name="Stahl D."/>
            <person name="Richardson P."/>
        </authorList>
    </citation>
    <scope>NUCLEOTIDE SEQUENCE [LARGE SCALE GENOMIC DNA]</scope>
    <source>
        <strain>JS42</strain>
    </source>
</reference>
<protein>
    <recommendedName>
        <fullName evidence="1">HPr kinase/phosphorylase</fullName>
        <shortName evidence="1">HPrK/P</shortName>
        <ecNumber evidence="1">2.7.11.-</ecNumber>
        <ecNumber evidence="1">2.7.4.-</ecNumber>
    </recommendedName>
    <alternativeName>
        <fullName evidence="1">HPr(Ser) kinase/phosphorylase</fullName>
    </alternativeName>
</protein>
<comment type="function">
    <text evidence="1">Catalyzes the ATP- as well as the pyrophosphate-dependent phosphorylation of a specific serine residue in HPr, a phosphocarrier protein of the phosphoenolpyruvate-dependent sugar phosphotransferase system (PTS). HprK/P also catalyzes the pyrophosphate-producing, inorganic phosphate-dependent dephosphorylation (phosphorolysis) of seryl-phosphorylated HPr (P-Ser-HPr).</text>
</comment>
<comment type="catalytic activity">
    <reaction evidence="1">
        <text>[HPr protein]-L-serine + ATP = [HPr protein]-O-phospho-L-serine + ADP + H(+)</text>
        <dbReference type="Rhea" id="RHEA:46600"/>
        <dbReference type="Rhea" id="RHEA-COMP:11602"/>
        <dbReference type="Rhea" id="RHEA-COMP:11603"/>
        <dbReference type="ChEBI" id="CHEBI:15378"/>
        <dbReference type="ChEBI" id="CHEBI:29999"/>
        <dbReference type="ChEBI" id="CHEBI:30616"/>
        <dbReference type="ChEBI" id="CHEBI:83421"/>
        <dbReference type="ChEBI" id="CHEBI:456216"/>
    </reaction>
</comment>
<comment type="catalytic activity">
    <reaction evidence="1">
        <text>[HPr protein]-O-phospho-L-serine + phosphate + H(+) = [HPr protein]-L-serine + diphosphate</text>
        <dbReference type="Rhea" id="RHEA:46604"/>
        <dbReference type="Rhea" id="RHEA-COMP:11602"/>
        <dbReference type="Rhea" id="RHEA-COMP:11603"/>
        <dbReference type="ChEBI" id="CHEBI:15378"/>
        <dbReference type="ChEBI" id="CHEBI:29999"/>
        <dbReference type="ChEBI" id="CHEBI:33019"/>
        <dbReference type="ChEBI" id="CHEBI:43474"/>
        <dbReference type="ChEBI" id="CHEBI:83421"/>
    </reaction>
</comment>
<comment type="cofactor">
    <cofactor evidence="1">
        <name>Mg(2+)</name>
        <dbReference type="ChEBI" id="CHEBI:18420"/>
    </cofactor>
</comment>
<comment type="subunit">
    <text evidence="1">Homohexamer.</text>
</comment>
<comment type="domain">
    <text evidence="1">The Walker A ATP-binding motif also binds Pi and PPi.</text>
</comment>
<comment type="miscellaneous">
    <text evidence="1">Both phosphorylation and phosphorolysis are carried out by the same active site and suggest a common mechanism for both reactions.</text>
</comment>
<comment type="similarity">
    <text evidence="1">Belongs to the HPrK/P family.</text>
</comment>
<name>HPRK_ACISJ</name>
<feature type="chain" id="PRO_1000067116" description="HPr kinase/phosphorylase">
    <location>
        <begin position="1"/>
        <end position="318"/>
    </location>
</feature>
<feature type="region of interest" description="Important for the catalytic mechanism of both phosphorylation and dephosphorylation" evidence="1">
    <location>
        <begin position="209"/>
        <end position="218"/>
    </location>
</feature>
<feature type="region of interest" description="Important for the catalytic mechanism of dephosphorylation" evidence="1">
    <location>
        <begin position="273"/>
        <end position="278"/>
    </location>
</feature>
<feature type="active site" evidence="1">
    <location>
        <position position="146"/>
    </location>
</feature>
<feature type="active site" evidence="1">
    <location>
        <position position="167"/>
    </location>
</feature>
<feature type="active site" description="Proton acceptor; for phosphorylation activity. Proton donor; for dephosphorylation activity" evidence="1">
    <location>
        <position position="185"/>
    </location>
</feature>
<feature type="active site" evidence="1">
    <location>
        <position position="252"/>
    </location>
</feature>
<feature type="binding site" evidence="1">
    <location>
        <begin position="161"/>
        <end position="168"/>
    </location>
    <ligand>
        <name>ATP</name>
        <dbReference type="ChEBI" id="CHEBI:30616"/>
    </ligand>
</feature>
<feature type="binding site" evidence="1">
    <location>
        <position position="168"/>
    </location>
    <ligand>
        <name>Mg(2+)</name>
        <dbReference type="ChEBI" id="CHEBI:18420"/>
    </ligand>
</feature>
<feature type="binding site" evidence="1">
    <location>
        <position position="210"/>
    </location>
    <ligand>
        <name>Mg(2+)</name>
        <dbReference type="ChEBI" id="CHEBI:18420"/>
    </ligand>
</feature>